<feature type="initiator methionine" description="Removed" evidence="3">
    <location>
        <position position="1"/>
    </location>
</feature>
<feature type="chain" id="PRO_0000207819" description="Photosystem I reaction center subunit IX">
    <location>
        <begin position="2"/>
        <end position="49"/>
    </location>
</feature>
<feature type="transmembrane region" description="Helical" evidence="2">
    <location>
        <begin position="14"/>
        <end position="34"/>
    </location>
</feature>
<feature type="helix" evidence="5">
    <location>
        <begin position="6"/>
        <end position="15"/>
    </location>
</feature>
<feature type="helix" evidence="5">
    <location>
        <begin position="18"/>
        <end position="39"/>
    </location>
</feature>
<dbReference type="EMBL" id="BA000019">
    <property type="protein sequence ID" value="BAB77632.1"/>
    <property type="molecule type" value="Genomic_DNA"/>
</dbReference>
<dbReference type="PIR" id="AD1820">
    <property type="entry name" value="AD1820"/>
</dbReference>
<dbReference type="RefSeq" id="WP_010994285.1">
    <property type="nucleotide sequence ID" value="NZ_RSCN01000016.1"/>
</dbReference>
<dbReference type="PDB" id="6JEO">
    <property type="method" value="EM"/>
    <property type="resolution" value="3.30 A"/>
    <property type="chains" value="aJ/bJ/cJ/dJ=1-49"/>
</dbReference>
<dbReference type="PDB" id="6K61">
    <property type="method" value="EM"/>
    <property type="resolution" value="2.37 A"/>
    <property type="chains" value="J/j=1-49"/>
</dbReference>
<dbReference type="PDB" id="6TCL">
    <property type="method" value="EM"/>
    <property type="resolution" value="3.20 A"/>
    <property type="chains" value="J/J1/J2/JJ=2-49"/>
</dbReference>
<dbReference type="PDB" id="7Y3F">
    <property type="method" value="EM"/>
    <property type="resolution" value="2.62 A"/>
    <property type="chains" value="J=1-49"/>
</dbReference>
<dbReference type="PDBsum" id="6JEO"/>
<dbReference type="PDBsum" id="6K61"/>
<dbReference type="PDBsum" id="6TCL"/>
<dbReference type="PDBsum" id="7Y3F"/>
<dbReference type="EMDB" id="EMD-10461"/>
<dbReference type="EMDB" id="EMD-33593"/>
<dbReference type="EMDB" id="EMD-9807"/>
<dbReference type="EMDB" id="EMD-9918"/>
<dbReference type="SMR" id="P58568"/>
<dbReference type="STRING" id="103690.gene:10492112"/>
<dbReference type="KEGG" id="ana:asl0108"/>
<dbReference type="eggNOG" id="ENOG5033A5A">
    <property type="taxonomic scope" value="Bacteria"/>
</dbReference>
<dbReference type="OrthoDB" id="532702at2"/>
<dbReference type="Proteomes" id="UP000002483">
    <property type="component" value="Chromosome"/>
</dbReference>
<dbReference type="GO" id="GO:0009522">
    <property type="term" value="C:photosystem I"/>
    <property type="evidence" value="ECO:0007669"/>
    <property type="project" value="UniProtKB-KW"/>
</dbReference>
<dbReference type="GO" id="GO:0031676">
    <property type="term" value="C:plasma membrane-derived thylakoid membrane"/>
    <property type="evidence" value="ECO:0007669"/>
    <property type="project" value="UniProtKB-SubCell"/>
</dbReference>
<dbReference type="GO" id="GO:0015979">
    <property type="term" value="P:photosynthesis"/>
    <property type="evidence" value="ECO:0007669"/>
    <property type="project" value="UniProtKB-UniRule"/>
</dbReference>
<dbReference type="Gene3D" id="1.20.5.510">
    <property type="entry name" value="Single helix bin"/>
    <property type="match status" value="1"/>
</dbReference>
<dbReference type="HAMAP" id="MF_00522">
    <property type="entry name" value="PSI_PsaJ"/>
    <property type="match status" value="1"/>
</dbReference>
<dbReference type="InterPro" id="IPR002615">
    <property type="entry name" value="PSI_PsaJ"/>
</dbReference>
<dbReference type="InterPro" id="IPR036062">
    <property type="entry name" value="PSI_PsaJ_sf"/>
</dbReference>
<dbReference type="NCBIfam" id="NF002743">
    <property type="entry name" value="PRK02733.1"/>
    <property type="match status" value="1"/>
</dbReference>
<dbReference type="PANTHER" id="PTHR36082">
    <property type="match status" value="1"/>
</dbReference>
<dbReference type="PANTHER" id="PTHR36082:SF2">
    <property type="entry name" value="PHOTOSYSTEM I REACTION CENTER SUBUNIT IX"/>
    <property type="match status" value="1"/>
</dbReference>
<dbReference type="Pfam" id="PF01701">
    <property type="entry name" value="PSI_PsaJ"/>
    <property type="match status" value="1"/>
</dbReference>
<dbReference type="SUPFAM" id="SSF81544">
    <property type="entry name" value="Subunit IX of photosystem I reaction centre, PsaJ"/>
    <property type="match status" value="1"/>
</dbReference>
<organism>
    <name type="scientific">Nostoc sp. (strain PCC 7120 / SAG 25.82 / UTEX 2576)</name>
    <dbReference type="NCBI Taxonomy" id="103690"/>
    <lineage>
        <taxon>Bacteria</taxon>
        <taxon>Bacillati</taxon>
        <taxon>Cyanobacteriota</taxon>
        <taxon>Cyanophyceae</taxon>
        <taxon>Nostocales</taxon>
        <taxon>Nostocaceae</taxon>
        <taxon>Nostoc</taxon>
    </lineage>
</organism>
<protein>
    <recommendedName>
        <fullName>Photosystem I reaction center subunit IX</fullName>
    </recommendedName>
</protein>
<evidence type="ECO:0000250" key="1"/>
<evidence type="ECO:0000255" key="2"/>
<evidence type="ECO:0000269" key="3">
    <source>
    </source>
</evidence>
<evidence type="ECO:0000305" key="4"/>
<evidence type="ECO:0007829" key="5">
    <source>
        <dbReference type="PDB" id="6K61"/>
    </source>
</evidence>
<proteinExistence type="evidence at protein level"/>
<accession>P58568</accession>
<gene>
    <name type="primary">psaJ</name>
    <name type="ordered locus">asl0108</name>
</gene>
<keyword id="KW-0002">3D-structure</keyword>
<keyword id="KW-0903">Direct protein sequencing</keyword>
<keyword id="KW-0472">Membrane</keyword>
<keyword id="KW-0602">Photosynthesis</keyword>
<keyword id="KW-0603">Photosystem I</keyword>
<keyword id="KW-1185">Reference proteome</keyword>
<keyword id="KW-0793">Thylakoid</keyword>
<keyword id="KW-0812">Transmembrane</keyword>
<keyword id="KW-1133">Transmembrane helix</keyword>
<comment type="function">
    <text evidence="1">May help in the organization of the PsaE and PsaF subunits.</text>
</comment>
<comment type="subunit">
    <text evidence="3">The cyanobacterial PSI reaction center is composed of one copy each of PsaA,B,C,D,E,F,I,J,K,L,M and X, and forms dimeric and tetrameric complexes.</text>
</comment>
<comment type="subcellular location">
    <subcellularLocation>
        <location evidence="3">Cellular thylakoid membrane</location>
        <topology evidence="1">Single-pass membrane protein</topology>
    </subcellularLocation>
</comment>
<comment type="similarity">
    <text evidence="4">Belongs to the PsaJ family.</text>
</comment>
<name>PSAJ_NOSS1</name>
<reference key="1">
    <citation type="journal article" date="2001" name="DNA Res.">
        <title>Complete genomic sequence of the filamentous nitrogen-fixing cyanobacterium Anabaena sp. strain PCC 7120.</title>
        <authorList>
            <person name="Kaneko T."/>
            <person name="Nakamura Y."/>
            <person name="Wolk C.P."/>
            <person name="Kuritz T."/>
            <person name="Sasamoto S."/>
            <person name="Watanabe A."/>
            <person name="Iriguchi M."/>
            <person name="Ishikawa A."/>
            <person name="Kawashima K."/>
            <person name="Kimura T."/>
            <person name="Kishida Y."/>
            <person name="Kohara M."/>
            <person name="Matsumoto M."/>
            <person name="Matsuno A."/>
            <person name="Muraki A."/>
            <person name="Nakazaki N."/>
            <person name="Shimpo S."/>
            <person name="Sugimoto M."/>
            <person name="Takazawa M."/>
            <person name="Yamada M."/>
            <person name="Yasuda M."/>
            <person name="Tabata S."/>
        </authorList>
    </citation>
    <scope>NUCLEOTIDE SEQUENCE [LARGE SCALE GENOMIC DNA]</scope>
    <source>
        <strain>PCC 7120 / SAG 25.82 / UTEX 2576</strain>
    </source>
</reference>
<reference key="2">
    <citation type="journal article" date="2014" name="Proc. Natl. Acad. Sci. U.S.A.">
        <title>Attachment of phycobilisomes in an antenna-photosystem I supercomplex of cyanobacteria.</title>
        <authorList>
            <person name="Watanabe M."/>
            <person name="Semchonok D.A."/>
            <person name="Webber-Birungi M.T."/>
            <person name="Ehira S."/>
            <person name="Kondo K."/>
            <person name="Narikawa R."/>
            <person name="Ohmori M."/>
            <person name="Boekema E.J."/>
            <person name="Ikeuchi M."/>
        </authorList>
    </citation>
    <scope>PROTEIN SEQUENCE OF 2-11</scope>
    <scope>SUBUNIT</scope>
    <scope>SUBCELLULAR LOCATION</scope>
    <source>
        <strain>PCC 7120 / SAG 25.82 / UTEX 2576</strain>
    </source>
</reference>
<sequence>MADKADQSSYLIKFISTAPVAATIWLTITAGILIEFNRFFPDLLFHPLP</sequence>